<proteinExistence type="inferred from homology"/>
<protein>
    <recommendedName>
        <fullName evidence="1">Peptide chain release factor 1</fullName>
        <shortName evidence="1">RF-1</shortName>
    </recommendedName>
</protein>
<reference key="1">
    <citation type="journal article" date="2006" name="Science">
        <title>Genomic islands and the ecology and evolution of Prochlorococcus.</title>
        <authorList>
            <person name="Coleman M.L."/>
            <person name="Sullivan M.B."/>
            <person name="Martiny A.C."/>
            <person name="Steglich C."/>
            <person name="Barry K."/>
            <person name="Delong E.F."/>
            <person name="Chisholm S.W."/>
        </authorList>
    </citation>
    <scope>NUCLEOTIDE SEQUENCE [LARGE SCALE GENOMIC DNA]</scope>
    <source>
        <strain>MIT 9312</strain>
    </source>
</reference>
<comment type="function">
    <text evidence="1">Peptide chain release factor 1 directs the termination of translation in response to the peptide chain termination codons UAG and UAA.</text>
</comment>
<comment type="subcellular location">
    <subcellularLocation>
        <location evidence="1">Cytoplasm</location>
    </subcellularLocation>
</comment>
<comment type="PTM">
    <text evidence="1">Methylated by PrmC. Methylation increases the termination efficiency of RF1.</text>
</comment>
<comment type="similarity">
    <text evidence="1">Belongs to the prokaryotic/mitochondrial release factor family.</text>
</comment>
<evidence type="ECO:0000255" key="1">
    <source>
        <dbReference type="HAMAP-Rule" id="MF_00093"/>
    </source>
</evidence>
<organism>
    <name type="scientific">Prochlorococcus marinus (strain MIT 9312)</name>
    <dbReference type="NCBI Taxonomy" id="74546"/>
    <lineage>
        <taxon>Bacteria</taxon>
        <taxon>Bacillati</taxon>
        <taxon>Cyanobacteriota</taxon>
        <taxon>Cyanophyceae</taxon>
        <taxon>Synechococcales</taxon>
        <taxon>Prochlorococcaceae</taxon>
        <taxon>Prochlorococcus</taxon>
    </lineage>
</organism>
<dbReference type="EMBL" id="CP000111">
    <property type="protein sequence ID" value="ABB50682.1"/>
    <property type="molecule type" value="Genomic_DNA"/>
</dbReference>
<dbReference type="RefSeq" id="WP_011377164.1">
    <property type="nucleotide sequence ID" value="NC_007577.1"/>
</dbReference>
<dbReference type="SMR" id="Q318L3"/>
<dbReference type="STRING" id="74546.PMT9312_1622"/>
<dbReference type="KEGG" id="pmi:PMT9312_1622"/>
<dbReference type="eggNOG" id="COG0216">
    <property type="taxonomic scope" value="Bacteria"/>
</dbReference>
<dbReference type="HOGENOM" id="CLU_036856_0_1_3"/>
<dbReference type="OrthoDB" id="9806673at2"/>
<dbReference type="Proteomes" id="UP000002715">
    <property type="component" value="Chromosome"/>
</dbReference>
<dbReference type="GO" id="GO:0005737">
    <property type="term" value="C:cytoplasm"/>
    <property type="evidence" value="ECO:0007669"/>
    <property type="project" value="UniProtKB-SubCell"/>
</dbReference>
<dbReference type="GO" id="GO:0016149">
    <property type="term" value="F:translation release factor activity, codon specific"/>
    <property type="evidence" value="ECO:0007669"/>
    <property type="project" value="UniProtKB-UniRule"/>
</dbReference>
<dbReference type="FunFam" id="3.30.160.20:FF:000004">
    <property type="entry name" value="Peptide chain release factor 1"/>
    <property type="match status" value="1"/>
</dbReference>
<dbReference type="FunFam" id="3.30.70.1660:FF:000002">
    <property type="entry name" value="Peptide chain release factor 1"/>
    <property type="match status" value="1"/>
</dbReference>
<dbReference type="Gene3D" id="3.30.160.20">
    <property type="match status" value="1"/>
</dbReference>
<dbReference type="Gene3D" id="3.30.70.1660">
    <property type="match status" value="1"/>
</dbReference>
<dbReference type="Gene3D" id="6.10.140.1950">
    <property type="match status" value="1"/>
</dbReference>
<dbReference type="HAMAP" id="MF_00093">
    <property type="entry name" value="Rel_fac_1"/>
    <property type="match status" value="1"/>
</dbReference>
<dbReference type="InterPro" id="IPR005139">
    <property type="entry name" value="PCRF"/>
</dbReference>
<dbReference type="InterPro" id="IPR000352">
    <property type="entry name" value="Pep_chain_release_fac_I"/>
</dbReference>
<dbReference type="InterPro" id="IPR045853">
    <property type="entry name" value="Pep_chain_release_fac_I_sf"/>
</dbReference>
<dbReference type="InterPro" id="IPR050057">
    <property type="entry name" value="Prokaryotic/Mito_RF"/>
</dbReference>
<dbReference type="InterPro" id="IPR004373">
    <property type="entry name" value="RF-1"/>
</dbReference>
<dbReference type="NCBIfam" id="TIGR00019">
    <property type="entry name" value="prfA"/>
    <property type="match status" value="1"/>
</dbReference>
<dbReference type="NCBIfam" id="NF001859">
    <property type="entry name" value="PRK00591.1"/>
    <property type="match status" value="1"/>
</dbReference>
<dbReference type="PANTHER" id="PTHR43804">
    <property type="entry name" value="LD18447P"/>
    <property type="match status" value="1"/>
</dbReference>
<dbReference type="PANTHER" id="PTHR43804:SF8">
    <property type="entry name" value="PEPTIDE CHAIN RELEASE FACTOR APG3, CHLOROPLASTIC"/>
    <property type="match status" value="1"/>
</dbReference>
<dbReference type="Pfam" id="PF03462">
    <property type="entry name" value="PCRF"/>
    <property type="match status" value="1"/>
</dbReference>
<dbReference type="Pfam" id="PF00472">
    <property type="entry name" value="RF-1"/>
    <property type="match status" value="1"/>
</dbReference>
<dbReference type="SMART" id="SM00937">
    <property type="entry name" value="PCRF"/>
    <property type="match status" value="1"/>
</dbReference>
<dbReference type="SUPFAM" id="SSF75620">
    <property type="entry name" value="Release factor"/>
    <property type="match status" value="1"/>
</dbReference>
<dbReference type="PROSITE" id="PS00745">
    <property type="entry name" value="RF_PROK_I"/>
    <property type="match status" value="1"/>
</dbReference>
<accession>Q318L3</accession>
<keyword id="KW-0963">Cytoplasm</keyword>
<keyword id="KW-0488">Methylation</keyword>
<keyword id="KW-0648">Protein biosynthesis</keyword>
<name>RF1_PROM9</name>
<feature type="chain" id="PRO_0000263315" description="Peptide chain release factor 1">
    <location>
        <begin position="1"/>
        <end position="364"/>
    </location>
</feature>
<feature type="modified residue" description="N5-methylglutamine" evidence="1">
    <location>
        <position position="239"/>
    </location>
</feature>
<sequence length="364" mass="40853">MEYSTLIARLKTASESFENLEVQLADPDIANDPKKLESIARERSKLEPLVIDFNKLLDTDKEIEDSKNLLKENRNDKEMESLINEELINLEECKNQLIQKTTIALLPKDPRDERSVMLEIRAGAGGSEACIWAGDLARMYERYGQKIGWSVKPVSASESDMGGFKELVISVKGDSVYSQLKFEAGVHRVQRVPATESQGRVHTSTATVAVMPEADPVEVKIDPTDLEVGTARSGGAGGQNVNKVETAIDLLHKPTGIRVFCTQERSQLQNRERAMEILRAKLYEIQLKEANAKERSQRLSQVGTGDRSEKIRTYNFKDNRTTDHRLGSNFSLEPILAGQLDEVIDACIAQEQKRMMEDFNNDVN</sequence>
<gene>
    <name evidence="1" type="primary">prfA</name>
    <name type="ordered locus">PMT9312_1622</name>
</gene>